<gene>
    <name type="primary">lmbrd1</name>
</gene>
<sequence length="539" mass="61556">MATGSTELLIGWCIFGVLLLAILAFCWVYVRKYQSHQESEVISTITAISSLAIALITSALLPVDIFLVSFMKNHNGTFKDWAESNTTRLQIENTVLIGYYTLYSIILFCVFLWIPFVYFYYEEKDDTDGSQCSQIANAFKYTSGFILVCSCLLLIGAFAPLDIHTNKNSTDLDKIKLLFLELGSSNGLAALSFSISSLTLIGMLAAITYTAYGMSALPLNLIKGTRNAHYERLENSEDIEEVEQQVERIMSKCKDGRPLSSKDRQALYKLKEKLRTLKRRDRHLEYHENNCWTKCCIVIRPFKIIWGILFILVALLFIVSLFLSNLDKALHSAGIDSGFIIFGTNLTNPLNMLLPVLQTVFPLDYIFITIITMYFIFTSMAGIRNMGIWFFWIRLYKIRRRRTRPQALLFLCMILLLIVLHTSYMIYSLAPQYVMYGSQKYLWENNSTQETAIGNSSASVLKDCDASAPEDQCTVTRTYLFLHKFWFFSSIYYFGNWAFIVVFVIGLIVSCCKGKKSVIEGEVEDDDSDLSDDEEHPYA</sequence>
<keyword id="KW-1003">Cell membrane</keyword>
<keyword id="KW-0846">Cobalamin</keyword>
<keyword id="KW-0170">Cobalt</keyword>
<keyword id="KW-0256">Endoplasmic reticulum</keyword>
<keyword id="KW-0325">Glycoprotein</keyword>
<keyword id="KW-0458">Lysosome</keyword>
<keyword id="KW-0472">Membrane</keyword>
<keyword id="KW-1185">Reference proteome</keyword>
<keyword id="KW-0812">Transmembrane</keyword>
<keyword id="KW-1133">Transmembrane helix</keyword>
<keyword id="KW-0813">Transport</keyword>
<name>LMBD1_XENTR</name>
<evidence type="ECO:0000250" key="1">
    <source>
        <dbReference type="UniProtKB" id="Q8K0B2"/>
    </source>
</evidence>
<evidence type="ECO:0000250" key="2">
    <source>
        <dbReference type="UniProtKB" id="Q9NUN5"/>
    </source>
</evidence>
<evidence type="ECO:0000255" key="3"/>
<evidence type="ECO:0000305" key="4"/>
<protein>
    <recommendedName>
        <fullName evidence="2">Lysosomal cobalamin transport escort protein LMBD1</fullName>
        <shortName>LMBD1</shortName>
    </recommendedName>
    <alternativeName>
        <fullName>LMBR1 domain-containing protein 1</fullName>
    </alternativeName>
</protein>
<comment type="function">
    <text evidence="1 2">Lysosomal membrane chaperone required to export cobalamin (vitamin B12) from the lysosome to the cytosol, allowing its conversion to cofactors. Targets ABCD4 transporter from the endoplasmic reticulum to the lysosome. Then forms a complex with lysosomal ABCD4 and cytoplasmic MMACHC to transport cobalamin across the lysosomal membrane (By similarity). May play a role in mediating and regulating the internalization of the insulin receptor (By similarity).</text>
</comment>
<comment type="subcellular location">
    <subcellularLocation>
        <location evidence="2">Endoplasmic reticulum membrane</location>
    </subcellularLocation>
    <subcellularLocation>
        <location evidence="2">Lysosome membrane</location>
        <topology evidence="3">Multi-pass membrane protein</topology>
    </subcellularLocation>
    <subcellularLocation>
        <location evidence="1">Cell membrane</location>
        <topology evidence="3">Multi-pass membrane protein</topology>
    </subcellularLocation>
</comment>
<comment type="similarity">
    <text evidence="4">Belongs to the LIMR family. LMBRD1 subfamily.</text>
</comment>
<organism>
    <name type="scientific">Xenopus tropicalis</name>
    <name type="common">Western clawed frog</name>
    <name type="synonym">Silurana tropicalis</name>
    <dbReference type="NCBI Taxonomy" id="8364"/>
    <lineage>
        <taxon>Eukaryota</taxon>
        <taxon>Metazoa</taxon>
        <taxon>Chordata</taxon>
        <taxon>Craniata</taxon>
        <taxon>Vertebrata</taxon>
        <taxon>Euteleostomi</taxon>
        <taxon>Amphibia</taxon>
        <taxon>Batrachia</taxon>
        <taxon>Anura</taxon>
        <taxon>Pipoidea</taxon>
        <taxon>Pipidae</taxon>
        <taxon>Xenopodinae</taxon>
        <taxon>Xenopus</taxon>
        <taxon>Silurana</taxon>
    </lineage>
</organism>
<proteinExistence type="evidence at transcript level"/>
<reference key="1">
    <citation type="submission" date="2004-08" db="EMBL/GenBank/DDBJ databases">
        <authorList>
            <consortium name="NIH - Xenopus Gene Collection (XGC) project"/>
        </authorList>
    </citation>
    <scope>NUCLEOTIDE SEQUENCE [LARGE SCALE MRNA]</scope>
    <source>
        <tissue>Embryo</tissue>
    </source>
</reference>
<dbReference type="EMBL" id="BC080477">
    <property type="protein sequence ID" value="AAH80477.1"/>
    <property type="molecule type" value="mRNA"/>
</dbReference>
<dbReference type="RefSeq" id="NP_001072184.1">
    <property type="nucleotide sequence ID" value="NM_001078716.1"/>
</dbReference>
<dbReference type="SMR" id="Q0VGV9"/>
<dbReference type="FunCoup" id="Q0VGV9">
    <property type="interactions" value="1392"/>
</dbReference>
<dbReference type="STRING" id="8364.ENSXETP00000017933"/>
<dbReference type="GlyCosmos" id="Q0VGV9">
    <property type="glycosylation" value="7 sites, No reported glycans"/>
</dbReference>
<dbReference type="PaxDb" id="8364-ENSXETP00000062645"/>
<dbReference type="GeneID" id="779630"/>
<dbReference type="KEGG" id="xtr:779630"/>
<dbReference type="AGR" id="Xenbase:XB-GENE-1015707"/>
<dbReference type="CTD" id="55788"/>
<dbReference type="Xenbase" id="XB-GENE-1015707">
    <property type="gene designation" value="lmbrd1"/>
</dbReference>
<dbReference type="eggNOG" id="ENOG502QQ2T">
    <property type="taxonomic scope" value="Eukaryota"/>
</dbReference>
<dbReference type="InParanoid" id="Q0VGV9"/>
<dbReference type="OMA" id="FWAQFVF"/>
<dbReference type="OrthoDB" id="73273at2759"/>
<dbReference type="Proteomes" id="UP000008143">
    <property type="component" value="Chromosome 5"/>
</dbReference>
<dbReference type="Bgee" id="ENSXETG00000011753">
    <property type="expression patterns" value="Expressed in mesonephros and 12 other cell types or tissues"/>
</dbReference>
<dbReference type="ExpressionAtlas" id="Q0VGV9">
    <property type="expression patterns" value="baseline"/>
</dbReference>
<dbReference type="GO" id="GO:0045334">
    <property type="term" value="C:clathrin-coated endocytic vesicle"/>
    <property type="evidence" value="ECO:0000250"/>
    <property type="project" value="UniProtKB"/>
</dbReference>
<dbReference type="GO" id="GO:0005789">
    <property type="term" value="C:endoplasmic reticulum membrane"/>
    <property type="evidence" value="ECO:0000250"/>
    <property type="project" value="UniProtKB"/>
</dbReference>
<dbReference type="GO" id="GO:0005765">
    <property type="term" value="C:lysosomal membrane"/>
    <property type="evidence" value="ECO:0000250"/>
    <property type="project" value="UniProtKB"/>
</dbReference>
<dbReference type="GO" id="GO:0005886">
    <property type="term" value="C:plasma membrane"/>
    <property type="evidence" value="ECO:0000250"/>
    <property type="project" value="UniProtKB"/>
</dbReference>
<dbReference type="GO" id="GO:0031419">
    <property type="term" value="F:cobalamin binding"/>
    <property type="evidence" value="ECO:0007669"/>
    <property type="project" value="UniProtKB-KW"/>
</dbReference>
<dbReference type="GO" id="GO:0038016">
    <property type="term" value="P:insulin receptor internalization"/>
    <property type="evidence" value="ECO:0000250"/>
    <property type="project" value="UniProtKB"/>
</dbReference>
<dbReference type="GO" id="GO:0061462">
    <property type="term" value="P:protein localization to lysosome"/>
    <property type="evidence" value="ECO:0000250"/>
    <property type="project" value="UniProtKB"/>
</dbReference>
<dbReference type="InterPro" id="IPR050854">
    <property type="entry name" value="LMBD1_LysCbl_Transport"/>
</dbReference>
<dbReference type="InterPro" id="IPR006876">
    <property type="entry name" value="LMBR1-like_membr_prot"/>
</dbReference>
<dbReference type="PANTHER" id="PTHR16130:SF2">
    <property type="entry name" value="LYSOSOMAL COBALAMIN TRANSPORT ESCORT PROTEIN LMBD1"/>
    <property type="match status" value="1"/>
</dbReference>
<dbReference type="PANTHER" id="PTHR16130">
    <property type="entry name" value="LYSOSOMAL COBALAMIN TRANSPORTER-RELATED"/>
    <property type="match status" value="1"/>
</dbReference>
<dbReference type="Pfam" id="PF04791">
    <property type="entry name" value="LMBR1"/>
    <property type="match status" value="1"/>
</dbReference>
<feature type="chain" id="PRO_0000365820" description="Lysosomal cobalamin transport escort protein LMBD1">
    <location>
        <begin position="1"/>
        <end position="539"/>
    </location>
</feature>
<feature type="topological domain" description="Extracellular" evidence="3">
    <location>
        <begin position="1"/>
        <end position="7"/>
    </location>
</feature>
<feature type="transmembrane region" description="Helical; Name=1" evidence="3">
    <location>
        <begin position="8"/>
        <end position="28"/>
    </location>
</feature>
<feature type="topological domain" description="Cytoplasmic" evidence="3">
    <location>
        <begin position="29"/>
        <end position="47"/>
    </location>
</feature>
<feature type="transmembrane region" description="Helical; Name=2" evidence="3">
    <location>
        <begin position="48"/>
        <end position="68"/>
    </location>
</feature>
<feature type="topological domain" description="Extracellular" evidence="3">
    <location>
        <begin position="69"/>
        <end position="98"/>
    </location>
</feature>
<feature type="transmembrane region" description="Helical; Name=3" evidence="3">
    <location>
        <begin position="99"/>
        <end position="119"/>
    </location>
</feature>
<feature type="topological domain" description="Cytoplasmic" evidence="3">
    <location>
        <begin position="120"/>
        <end position="142"/>
    </location>
</feature>
<feature type="transmembrane region" description="Helical; Name=4" evidence="3">
    <location>
        <begin position="143"/>
        <end position="163"/>
    </location>
</feature>
<feature type="topological domain" description="Extracellular" evidence="3">
    <location>
        <begin position="164"/>
        <end position="186"/>
    </location>
</feature>
<feature type="transmembrane region" description="Helical; Name=5" evidence="3">
    <location>
        <begin position="187"/>
        <end position="207"/>
    </location>
</feature>
<feature type="topological domain" description="Cytoplasmic" evidence="3">
    <location>
        <begin position="208"/>
        <end position="303"/>
    </location>
</feature>
<feature type="transmembrane region" description="Helical; Name=6" evidence="3">
    <location>
        <begin position="304"/>
        <end position="324"/>
    </location>
</feature>
<feature type="topological domain" description="Extracellular" evidence="3">
    <location>
        <begin position="325"/>
        <end position="362"/>
    </location>
</feature>
<feature type="transmembrane region" description="Helical; Name=7" evidence="3">
    <location>
        <begin position="363"/>
        <end position="383"/>
    </location>
</feature>
<feature type="topological domain" description="Cytoplasmic" evidence="3">
    <location>
        <begin position="384"/>
        <end position="406"/>
    </location>
</feature>
<feature type="transmembrane region" description="Helical; Name=8" evidence="3">
    <location>
        <begin position="407"/>
        <end position="427"/>
    </location>
</feature>
<feature type="topological domain" description="Extracellular" evidence="3">
    <location>
        <begin position="428"/>
        <end position="484"/>
    </location>
</feature>
<feature type="transmembrane region" description="Helical; Name=9" evidence="3">
    <location>
        <begin position="485"/>
        <end position="505"/>
    </location>
</feature>
<feature type="topological domain" description="Cytoplasmic" evidence="3">
    <location>
        <begin position="506"/>
        <end position="539"/>
    </location>
</feature>
<feature type="glycosylation site" description="N-linked (GlcNAc...) asparagine" evidence="3">
    <location>
        <position position="75"/>
    </location>
</feature>
<feature type="glycosylation site" description="N-linked (GlcNAc...) asparagine" evidence="3">
    <location>
        <position position="85"/>
    </location>
</feature>
<feature type="glycosylation site" description="N-linked (GlcNAc...) asparagine" evidence="3">
    <location>
        <position position="168"/>
    </location>
</feature>
<feature type="glycosylation site" description="N-linked (GlcNAc...) asparagine" evidence="3">
    <location>
        <position position="345"/>
    </location>
</feature>
<feature type="glycosylation site" description="N-linked (GlcNAc...) asparagine" evidence="3">
    <location>
        <position position="445"/>
    </location>
</feature>
<feature type="glycosylation site" description="N-linked (GlcNAc...) asparagine" evidence="3">
    <location>
        <position position="446"/>
    </location>
</feature>
<feature type="glycosylation site" description="N-linked (GlcNAc...) asparagine" evidence="3">
    <location>
        <position position="455"/>
    </location>
</feature>
<accession>Q0VGV9</accession>